<proteinExistence type="evidence at protein level"/>
<accession>P03574</accession>
<organism>
    <name type="scientific">Tobacco mosaic virus (strain 06)</name>
    <name type="common">TMV-06</name>
    <dbReference type="NCBI Taxonomy" id="12244"/>
    <lineage>
        <taxon>Viruses</taxon>
        <taxon>Riboviria</taxon>
        <taxon>Orthornavirae</taxon>
        <taxon>Kitrinoviricota</taxon>
        <taxon>Alsuviricetes</taxon>
        <taxon>Martellivirales</taxon>
        <taxon>Virgaviridae</taxon>
        <taxon>Tobamovirus</taxon>
        <taxon>Tobacco mosaic virus</taxon>
    </lineage>
</organism>
<reference key="1">
    <citation type="journal article" date="1973" name="FEBS Lett.">
        <title>Localisation of the three amino acid exchanges in the coat-protein of TMV-06.</title>
        <authorList>
            <person name="Gallwitz U."/>
        </authorList>
    </citation>
    <scope>PARTIAL PROTEIN SEQUENCE</scope>
</reference>
<organismHost>
    <name type="scientific">Nicotiana tabacum</name>
    <name type="common">Common tobacco</name>
    <dbReference type="NCBI Taxonomy" id="4097"/>
</organismHost>
<dbReference type="SMR" id="P03574"/>
<dbReference type="GO" id="GO:0019029">
    <property type="term" value="C:helical viral capsid"/>
    <property type="evidence" value="ECO:0007669"/>
    <property type="project" value="UniProtKB-KW"/>
</dbReference>
<dbReference type="GO" id="GO:0005198">
    <property type="term" value="F:structural molecule activity"/>
    <property type="evidence" value="ECO:0007669"/>
    <property type="project" value="InterPro"/>
</dbReference>
<dbReference type="Gene3D" id="1.20.120.70">
    <property type="entry name" value="Tobacco mosaic virus-like, coat protein"/>
    <property type="match status" value="1"/>
</dbReference>
<dbReference type="InterPro" id="IPR001337">
    <property type="entry name" value="TMV-like_coat"/>
</dbReference>
<dbReference type="InterPro" id="IPR036417">
    <property type="entry name" value="TMV-like_coat_sf"/>
</dbReference>
<dbReference type="Pfam" id="PF00721">
    <property type="entry name" value="TMV_coat"/>
    <property type="match status" value="1"/>
</dbReference>
<dbReference type="SUPFAM" id="SSF47195">
    <property type="entry name" value="TMV-like viral coat proteins"/>
    <property type="match status" value="1"/>
</dbReference>
<name>CAPSD_TMV06</name>
<evidence type="ECO:0000250" key="1"/>
<evidence type="ECO:0000305" key="2"/>
<feature type="initiator methionine" description="Removed; by host">
    <location>
        <position position="1"/>
    </location>
</feature>
<feature type="chain" id="PRO_0000144921" description="Capsid protein">
    <location>
        <begin position="2"/>
        <end position="159"/>
    </location>
</feature>
<feature type="modified residue" description="N-acetylserine; by host" evidence="1">
    <location>
        <position position="2"/>
    </location>
</feature>
<comment type="function">
    <text>Capsid protein self-assembles to form rod-shaped virions about 18 nm in diameter with a central canal enclosing the viral genomic RNA.</text>
</comment>
<comment type="subcellular location">
    <subcellularLocation>
        <location evidence="2">Virion</location>
    </subcellularLocation>
</comment>
<comment type="similarity">
    <text evidence="2">Belongs to the virgaviridae capsid protein family.</text>
</comment>
<gene>
    <name type="primary">CP</name>
</gene>
<keyword id="KW-0007">Acetylation</keyword>
<keyword id="KW-0167">Capsid protein</keyword>
<keyword id="KW-0903">Direct protein sequencing</keyword>
<keyword id="KW-1139">Helical capsid protein</keyword>
<keyword id="KW-0946">Virion</keyword>
<sequence length="159" mass="17720">MSYSITTPSHFVFLSSAWADPIELINLCTNALGNQFQTQQARTVVQRQFSEVWKPSPQVTVRFPDRDFKVYRYNAVLDPLVTALLGAFDTRNRIIEVENQANPTTAETLDATRRVDDATVAIRSAINNLMVELIRGTGSYNRSSFESSSGLVWTSGPAT</sequence>
<protein>
    <recommendedName>
        <fullName>Capsid protein</fullName>
    </recommendedName>
    <alternativeName>
        <fullName>Coat protein</fullName>
    </alternativeName>
</protein>